<organism>
    <name type="scientific">Salmonella paratyphi A (strain ATCC 9150 / SARB42)</name>
    <dbReference type="NCBI Taxonomy" id="295319"/>
    <lineage>
        <taxon>Bacteria</taxon>
        <taxon>Pseudomonadati</taxon>
        <taxon>Pseudomonadota</taxon>
        <taxon>Gammaproteobacteria</taxon>
        <taxon>Enterobacterales</taxon>
        <taxon>Enterobacteriaceae</taxon>
        <taxon>Salmonella</taxon>
    </lineage>
</organism>
<accession>Q5PFV0</accession>
<evidence type="ECO:0000255" key="1">
    <source>
        <dbReference type="HAMAP-Rule" id="MF_01198"/>
    </source>
</evidence>
<proteinExistence type="inferred from homology"/>
<gene>
    <name evidence="1" type="primary">iraP</name>
    <name type="ordered locus">SPA2340</name>
</gene>
<feature type="chain" id="PRO_0000337860" description="Anti-adapter protein IraP">
    <location>
        <begin position="1"/>
        <end position="86"/>
    </location>
</feature>
<feature type="coiled-coil region" evidence="1">
    <location>
        <begin position="1"/>
        <end position="36"/>
    </location>
</feature>
<sequence>MKNLIAELLLKLAQKEEESKELVAQVEALEIIVTAMLRNMAQNEQEMLIRQVEGALEGVKPDASVPDHDTELLRQYVKKLLRHPRH</sequence>
<protein>
    <recommendedName>
        <fullName evidence="1">Anti-adapter protein IraP</fullName>
    </recommendedName>
</protein>
<name>IRAP_SALPA</name>
<keyword id="KW-0175">Coiled coil</keyword>
<keyword id="KW-0963">Cytoplasm</keyword>
<keyword id="KW-0346">Stress response</keyword>
<dbReference type="EMBL" id="CP000026">
    <property type="protein sequence ID" value="AAV78225.1"/>
    <property type="molecule type" value="Genomic_DNA"/>
</dbReference>
<dbReference type="RefSeq" id="WP_001518423.1">
    <property type="nucleotide sequence ID" value="NC_006511.1"/>
</dbReference>
<dbReference type="SMR" id="Q5PFV0"/>
<dbReference type="KEGG" id="spt:SPA2340"/>
<dbReference type="HOGENOM" id="CLU_169517_0_0_6"/>
<dbReference type="Proteomes" id="UP000008185">
    <property type="component" value="Chromosome"/>
</dbReference>
<dbReference type="GO" id="GO:0005737">
    <property type="term" value="C:cytoplasm"/>
    <property type="evidence" value="ECO:0007669"/>
    <property type="project" value="UniProtKB-SubCell"/>
</dbReference>
<dbReference type="GO" id="GO:0009267">
    <property type="term" value="P:cellular response to starvation"/>
    <property type="evidence" value="ECO:0007669"/>
    <property type="project" value="UniProtKB-UniRule"/>
</dbReference>
<dbReference type="HAMAP" id="MF_01198">
    <property type="entry name" value="Anti_adapt_IraP"/>
    <property type="match status" value="1"/>
</dbReference>
<dbReference type="InterPro" id="IPR019732">
    <property type="entry name" value="SigmaS_Anti-adapt_IraP"/>
</dbReference>
<dbReference type="NCBIfam" id="NF007598">
    <property type="entry name" value="PRK10244.1"/>
    <property type="match status" value="1"/>
</dbReference>
<dbReference type="Pfam" id="PF10796">
    <property type="entry name" value="Anti-adapt_IraP"/>
    <property type="match status" value="1"/>
</dbReference>
<comment type="function">
    <text evidence="1">Inhibits RpoS proteolysis by regulating RssB activity, thereby increasing the stability of the sigma stress factor RpoS especially during phosphate and magnesium starvation, but also in stationary phase and during nitrogen starvation. Its effect on RpoS stability is due to its interaction with RssB, which probably blocks the interaction of RssB with RpoS, and the consequent delivery of the RssB-RpoS complex to the ClpXP protein degradation pathway.</text>
</comment>
<comment type="subunit">
    <text evidence="1">Interacts with RssB.</text>
</comment>
<comment type="subcellular location">
    <subcellularLocation>
        <location evidence="1">Cytoplasm</location>
    </subcellularLocation>
</comment>
<comment type="similarity">
    <text evidence="1">Belongs to the IraP family.</text>
</comment>
<reference key="1">
    <citation type="journal article" date="2004" name="Nat. Genet.">
        <title>Comparison of genome degradation in Paratyphi A and Typhi, human-restricted serovars of Salmonella enterica that cause typhoid.</title>
        <authorList>
            <person name="McClelland M."/>
            <person name="Sanderson K.E."/>
            <person name="Clifton S.W."/>
            <person name="Latreille P."/>
            <person name="Porwollik S."/>
            <person name="Sabo A."/>
            <person name="Meyer R."/>
            <person name="Bieri T."/>
            <person name="Ozersky P."/>
            <person name="McLellan M."/>
            <person name="Harkins C.R."/>
            <person name="Wang C."/>
            <person name="Nguyen C."/>
            <person name="Berghoff A."/>
            <person name="Elliott G."/>
            <person name="Kohlberg S."/>
            <person name="Strong C."/>
            <person name="Du F."/>
            <person name="Carter J."/>
            <person name="Kremizki C."/>
            <person name="Layman D."/>
            <person name="Leonard S."/>
            <person name="Sun H."/>
            <person name="Fulton L."/>
            <person name="Nash W."/>
            <person name="Miner T."/>
            <person name="Minx P."/>
            <person name="Delehaunty K."/>
            <person name="Fronick C."/>
            <person name="Magrini V."/>
            <person name="Nhan M."/>
            <person name="Warren W."/>
            <person name="Florea L."/>
            <person name="Spieth J."/>
            <person name="Wilson R.K."/>
        </authorList>
    </citation>
    <scope>NUCLEOTIDE SEQUENCE [LARGE SCALE GENOMIC DNA]</scope>
    <source>
        <strain>ATCC 9150 / SARB42</strain>
    </source>
</reference>